<protein>
    <recommendedName>
        <fullName>Guanine nucleotide exchange factor LTE1</fullName>
    </recommendedName>
    <alternativeName>
        <fullName>Low temperature essential protein 1</fullName>
    </alternativeName>
</protein>
<evidence type="ECO:0000255" key="1">
    <source>
        <dbReference type="PROSITE-ProRule" id="PRU00135"/>
    </source>
</evidence>
<evidence type="ECO:0000255" key="2">
    <source>
        <dbReference type="PROSITE-ProRule" id="PRU00168"/>
    </source>
</evidence>
<evidence type="ECO:0000256" key="3">
    <source>
        <dbReference type="SAM" id="MobiDB-lite"/>
    </source>
</evidence>
<evidence type="ECO:0000269" key="4">
    <source>
    </source>
</evidence>
<evidence type="ECO:0000269" key="5">
    <source>
    </source>
</evidence>
<evidence type="ECO:0000269" key="6">
    <source>
    </source>
</evidence>
<evidence type="ECO:0000269" key="7">
    <source>
    </source>
</evidence>
<evidence type="ECO:0000269" key="8">
    <source>
    </source>
</evidence>
<evidence type="ECO:0000269" key="9">
    <source>
    </source>
</evidence>
<evidence type="ECO:0000305" key="10"/>
<evidence type="ECO:0007744" key="11">
    <source>
    </source>
</evidence>
<evidence type="ECO:0007744" key="12">
    <source>
    </source>
</evidence>
<sequence>MEIFSQKDYYPTPSSNVISYESDCVSKPVNSADLPALIVHLSSPLEGVDYNASADFFLIYRNFITPQDLHDLLIYRFRWCIREITTNAAKAKRRRIGEVALVRTFVLLRHSILNYFVQDFLPNITLRLRLIEFLNDKHIEQYPKIISSCIINLKKNWVHCSKLVWENIELNEPDKLDFDAWLHYSLKDFTQLESLHKRGSRLSIYARQSFASPDFRNQSVLSLYKTSDVFRLPEKLQSSNSSKNQRSPSMLLFPDNTSNVYSKHRIAKEPSVDNESEDMSDSKQKISHLSKVTLVSTLMKGVDYPSSYAVDKIMPPTPAKKVEFILNSLYIPEDLNEQSGTLQGTSTTSSLDNNSNSNSRSNTSSMSVLHRSAIGLLAKWMKNHNRHDSSNDKKFMSAIKPANQKPEMDAFVKYVVSISSLNRKSSKEEEEEFLNSDSSKFDILSARTIDEVESLLHLQNQLIEKVQTHSNNNRGPTVNVDCERREHIHDIKILQQNSFKPSNDNFSAMDNLDLYQTVSSIAQSVISLTNTLNKQLQNNESNMQPSPSYDALQRRKVKSLTTAYYNKMHGSYSAESMRLFDKDNSSSRTDENGPQRLLFHETDKTNSEAITNMTPRRKNHSQSQKSMTSSPLKNVLPDLKESSPLNDSREDTESITYSYDSELSSSSPPRDTVTKKSRKVRNIVNNTDSPTLKTKTGFLNLREFTFEDTKSLDEKKSTIDGLEKNYDNKENQESEYESTKKLDNSLDASSEANNYDITTRKKHSSCNHKIKQAVVRPASGRISISRVQSIAITPTKELSIVDPEQNKSNSVIEEISEIEPLNLEYNKKSALYSDTSSTVISISTSKLFESAQNSPLKQTQNPQREFPNGTSVSETNRIRLSIAPTIESVVSDLNSITTGSTVETFETSRDLPVPHQRIINLREEYQRGNQDIISNTSSLHELKTIDLSDSNNDLESPSTHAKNNKYFFSPDDGSIDVASPMKNVEELKSKFLKNESETNSNISGSVLTMDDIDINDTSSARNTRRANSESAFTGSLNKKNLNEIANMLDDSINDDPITVALMKLEGTYEKIPEKPENTKSSDAIGIKTSKLADEVEMLNLNNLPSFQNSPAEKRKSLLIERRRQTIMNIPFTPDQSEKEGFTSSSPEKIDVSANVDVAVQAAQIQELIGQYRIHDSRLMISNNESHVPFILMYDSLSVAQQMTLIEKEILGEIDWKDLLDLKMKHEGPQVISWLQLLVRNETLSGIDLAISRFNLTVDWIISEILLTKSSKMKRNVIQRFIHVADHCRTFQNFNTLMEIILALSSSVVQKFTDAWRLIEPGDLLTWEELKKIPSLDRNYSTIRNLLNSVNPLVGCVPFIVVYLSDLSANAEKKDWILEDKVVNYNKFDTNVQIVKNFIQRVQWSKFYTFKVNHELLSKCVYISTLTQEEINELST</sequence>
<feature type="chain" id="PRO_0000068884" description="Guanine nucleotide exchange factor LTE1">
    <location>
        <begin position="1"/>
        <end position="1435"/>
    </location>
</feature>
<feature type="domain" description="N-terminal Ras-GEF" evidence="1">
    <location>
        <begin position="25"/>
        <end position="157"/>
    </location>
</feature>
<feature type="domain" description="Ras-GEF" evidence="2">
    <location>
        <begin position="1194"/>
        <end position="1434"/>
    </location>
</feature>
<feature type="region of interest" description="Disordered" evidence="3">
    <location>
        <begin position="235"/>
        <end position="256"/>
    </location>
</feature>
<feature type="region of interest" description="Disordered" evidence="3">
    <location>
        <begin position="338"/>
        <end position="365"/>
    </location>
</feature>
<feature type="region of interest" description="Disordered" evidence="3">
    <location>
        <begin position="582"/>
        <end position="689"/>
    </location>
</feature>
<feature type="region of interest" description="Disordered" evidence="3">
    <location>
        <begin position="723"/>
        <end position="747"/>
    </location>
</feature>
<feature type="region of interest" description="Disordered" evidence="3">
    <location>
        <begin position="851"/>
        <end position="871"/>
    </location>
</feature>
<feature type="compositionally biased region" description="Low complexity" evidence="3">
    <location>
        <begin position="237"/>
        <end position="249"/>
    </location>
</feature>
<feature type="compositionally biased region" description="Basic and acidic residues" evidence="3">
    <location>
        <begin position="582"/>
        <end position="606"/>
    </location>
</feature>
<feature type="compositionally biased region" description="Polar residues" evidence="3">
    <location>
        <begin position="621"/>
        <end position="632"/>
    </location>
</feature>
<feature type="compositionally biased region" description="Low complexity" evidence="3">
    <location>
        <begin position="654"/>
        <end position="667"/>
    </location>
</feature>
<feature type="compositionally biased region" description="Basic and acidic residues" evidence="3">
    <location>
        <begin position="723"/>
        <end position="744"/>
    </location>
</feature>
<feature type="modified residue" description="Phosphoserine" evidence="11">
    <location>
        <position position="271"/>
    </location>
</feature>
<feature type="modified residue" description="Phosphoserine" evidence="12">
    <location>
        <position position="559"/>
    </location>
</feature>
<feature type="modified residue" description="Phosphoserine" evidence="12">
    <location>
        <position position="689"/>
    </location>
</feature>
<feature type="modified residue" description="Phosphothreonine" evidence="12">
    <location>
        <position position="691"/>
    </location>
</feature>
<feature type="modified residue" description="Phosphoserine" evidence="12">
    <location>
        <position position="808"/>
    </location>
</feature>
<feature type="modified residue" description="Phosphoserine" evidence="12">
    <location>
        <position position="810"/>
    </location>
</feature>
<feature type="modified residue" description="Phosphoserine" evidence="11 12">
    <location>
        <position position="1028"/>
    </location>
</feature>
<feature type="modified residue" description="Phosphoserine" evidence="12">
    <location>
        <position position="1109"/>
    </location>
</feature>
<feature type="sequence conflict" description="In Ref. 4; BAA04820." evidence="10" ref="4">
    <original>TNSNISGSVLTM</original>
    <variation>LIVHIRKCIDN</variation>
    <location>
        <begin position="998"/>
        <end position="1009"/>
    </location>
</feature>
<feature type="sequence conflict" description="In Ref. 5; AAA34746." evidence="10" ref="5">
    <original>AAQ</original>
    <variation>GE</variation>
    <location>
        <begin position="1161"/>
        <end position="1163"/>
    </location>
</feature>
<comment type="function">
    <text>GDP-GTP exchange factor for TEM1, a Ras-like protein, component of the mitotic exit network (MEN). Activation of TEM1 by LTE1 in the bud ultimately leads to activation of CDC15 followed by the release of CDC14 from the nucleolus, which then inactivates cyclin-dependent kinases (CDKs) activity by several mechanism. Required for TEM1 localization to the bud cortex during mitotic exit. Fine-tunes the timing of the mitotic exit and couples this event with cytokinesis.</text>
</comment>
<comment type="function">
    <text>Involved in proprotein-processing like proalpha factor-processing in the secretory pathway.</text>
</comment>
<comment type="subunit">
    <text evidence="5 7 8">Interacts with CDC24, CDC42, KEL1, KEL2, RAS2 and TEM1.</text>
</comment>
<comment type="interaction">
    <interactant intactId="EBI-10243">
        <id>P07866</id>
    </interactant>
    <interactant intactId="EBI-9619">
        <id>P38853</id>
        <label>KEL1</label>
    </interactant>
    <organismsDiffer>false</organismsDiffer>
    <experiments>3</experiments>
</comment>
<comment type="interaction">
    <interactant intactId="EBI-10243">
        <id>P07866</id>
    </interactant>
    <interactant intactId="EBI-14838">
        <id>P01120</id>
        <label>RAS2</label>
    </interactant>
    <organismsDiffer>false</organismsDiffer>
    <experiments>5</experiments>
</comment>
<comment type="subcellular location">
    <subcellularLocation>
        <location>Cytoplasm</location>
    </subcellularLocation>
    <subcellularLocation>
        <location>Bud</location>
    </subcellularLocation>
    <text>The localization to the bud requires interaction with KEL1, as well as the presence of septins, CDC42, CLA4 and RAS2.</text>
</comment>
<comment type="PTM">
    <text evidence="4 5 6 7">Phosphorylated by CDC28 in a cell cycle-dependent manner and in response to nocodazole. Dephosphorylion by CDC14 triggers LTE1 release from bud cortex during the exit of mitosis.</text>
</comment>
<comment type="miscellaneous">
    <text evidence="9">Present with 304 molecules/cell in log phase SD medium.</text>
</comment>
<comment type="similarity">
    <text evidence="10">Belongs to the LTE1 family.</text>
</comment>
<gene>
    <name type="primary">LTE1</name>
    <name type="synonym">EIS4</name>
    <name type="synonym">MSI2</name>
    <name type="ordered locus">YAL024C</name>
</gene>
<keyword id="KW-0131">Cell cycle</keyword>
<keyword id="KW-0132">Cell division</keyword>
<keyword id="KW-0963">Cytoplasm</keyword>
<keyword id="KW-0344">Guanine-nucleotide releasing factor</keyword>
<keyword id="KW-0498">Mitosis</keyword>
<keyword id="KW-0597">Phosphoprotein</keyword>
<keyword id="KW-1185">Reference proteome</keyword>
<organism>
    <name type="scientific">Saccharomyces cerevisiae (strain ATCC 204508 / S288c)</name>
    <name type="common">Baker's yeast</name>
    <dbReference type="NCBI Taxonomy" id="559292"/>
    <lineage>
        <taxon>Eukaryota</taxon>
        <taxon>Fungi</taxon>
        <taxon>Dikarya</taxon>
        <taxon>Ascomycota</taxon>
        <taxon>Saccharomycotina</taxon>
        <taxon>Saccharomycetes</taxon>
        <taxon>Saccharomycetales</taxon>
        <taxon>Saccharomycetaceae</taxon>
        <taxon>Saccharomyces</taxon>
    </lineage>
</organism>
<proteinExistence type="evidence at protein level"/>
<dbReference type="EMBL" id="L20125">
    <property type="protein sequence ID" value="AAA50468.1"/>
    <property type="molecule type" value="Genomic_DNA"/>
</dbReference>
<dbReference type="EMBL" id="U12980">
    <property type="protein sequence ID" value="AAC05008.1"/>
    <property type="molecule type" value="Genomic_DNA"/>
</dbReference>
<dbReference type="EMBL" id="D21354">
    <property type="protein sequence ID" value="BAA04820.1"/>
    <property type="molecule type" value="Genomic_DNA"/>
</dbReference>
<dbReference type="EMBL" id="M16076">
    <property type="protein sequence ID" value="AAA34746.1"/>
    <property type="molecule type" value="Genomic_DNA"/>
</dbReference>
<dbReference type="EMBL" id="J03852">
    <property type="protein sequence ID" value="AAA34751.1"/>
    <property type="molecule type" value="Genomic_DNA"/>
</dbReference>
<dbReference type="EMBL" id="BK006935">
    <property type="protein sequence ID" value="DAA06964.1"/>
    <property type="molecule type" value="Genomic_DNA"/>
</dbReference>
<dbReference type="PIR" id="S51997">
    <property type="entry name" value="BVBYL1"/>
</dbReference>
<dbReference type="RefSeq" id="NP_009378.1">
    <property type="nucleotide sequence ID" value="NM_001178169.1"/>
</dbReference>
<dbReference type="SMR" id="P07866"/>
<dbReference type="BioGRID" id="31742">
    <property type="interactions" value="606"/>
</dbReference>
<dbReference type="DIP" id="DIP-337N"/>
<dbReference type="FunCoup" id="P07866">
    <property type="interactions" value="293"/>
</dbReference>
<dbReference type="IntAct" id="P07866">
    <property type="interactions" value="59"/>
</dbReference>
<dbReference type="MINT" id="P07866"/>
<dbReference type="STRING" id="4932.YAL024C"/>
<dbReference type="CarbonylDB" id="P07866"/>
<dbReference type="GlyGen" id="P07866">
    <property type="glycosylation" value="2 sites"/>
</dbReference>
<dbReference type="iPTMnet" id="P07866"/>
<dbReference type="PaxDb" id="4932-YAL024C"/>
<dbReference type="PeptideAtlas" id="P07866"/>
<dbReference type="EnsemblFungi" id="YAL024C_mRNA">
    <property type="protein sequence ID" value="YAL024C"/>
    <property type="gene ID" value="YAL024C"/>
</dbReference>
<dbReference type="GeneID" id="851209"/>
<dbReference type="KEGG" id="sce:YAL024C"/>
<dbReference type="AGR" id="SGD:S000000022"/>
<dbReference type="SGD" id="S000000022">
    <property type="gene designation" value="LTE1"/>
</dbReference>
<dbReference type="VEuPathDB" id="FungiDB:YAL024C"/>
<dbReference type="eggNOG" id="KOG3417">
    <property type="taxonomic scope" value="Eukaryota"/>
</dbReference>
<dbReference type="HOGENOM" id="CLU_004883_0_0_1"/>
<dbReference type="InParanoid" id="P07866"/>
<dbReference type="OMA" id="PFILMYD"/>
<dbReference type="OrthoDB" id="10254377at2759"/>
<dbReference type="BioCyc" id="YEAST:G3O-28835-MONOMER"/>
<dbReference type="Reactome" id="R-SCE-354192">
    <property type="pathway name" value="Integrin signaling"/>
</dbReference>
<dbReference type="Reactome" id="R-SCE-381676">
    <property type="pathway name" value="Glucagon-like Peptide-1 (GLP1) regulates insulin secretion"/>
</dbReference>
<dbReference type="Reactome" id="R-SCE-392517">
    <property type="pathway name" value="Rap1 signalling"/>
</dbReference>
<dbReference type="BioGRID-ORCS" id="851209">
    <property type="hits" value="1 hit in 10 CRISPR screens"/>
</dbReference>
<dbReference type="PRO" id="PR:P07866"/>
<dbReference type="Proteomes" id="UP000002311">
    <property type="component" value="Chromosome I"/>
</dbReference>
<dbReference type="RNAct" id="P07866">
    <property type="molecule type" value="protein"/>
</dbReference>
<dbReference type="GO" id="GO:0005933">
    <property type="term" value="C:cellular bud"/>
    <property type="evidence" value="ECO:0000314"/>
    <property type="project" value="SGD"/>
</dbReference>
<dbReference type="GO" id="GO:0005737">
    <property type="term" value="C:cytoplasm"/>
    <property type="evidence" value="ECO:0007669"/>
    <property type="project" value="UniProtKB-SubCell"/>
</dbReference>
<dbReference type="GO" id="GO:0005886">
    <property type="term" value="C:plasma membrane"/>
    <property type="evidence" value="ECO:0000318"/>
    <property type="project" value="GO_Central"/>
</dbReference>
<dbReference type="GO" id="GO:0005085">
    <property type="term" value="F:guanyl-nucleotide exchange factor activity"/>
    <property type="evidence" value="ECO:0000250"/>
    <property type="project" value="SGD"/>
</dbReference>
<dbReference type="GO" id="GO:0061510">
    <property type="term" value="P:asymmetric protein localization to new mitotic spindle pole body"/>
    <property type="evidence" value="ECO:0000315"/>
    <property type="project" value="SGD"/>
</dbReference>
<dbReference type="GO" id="GO:0051301">
    <property type="term" value="P:cell division"/>
    <property type="evidence" value="ECO:0007669"/>
    <property type="project" value="UniProtKB-KW"/>
</dbReference>
<dbReference type="GO" id="GO:0031536">
    <property type="term" value="P:positive regulation of exit from mitosis"/>
    <property type="evidence" value="ECO:0000315"/>
    <property type="project" value="SGD"/>
</dbReference>
<dbReference type="GO" id="GO:0007265">
    <property type="term" value="P:Ras protein signal transduction"/>
    <property type="evidence" value="ECO:0000318"/>
    <property type="project" value="GO_Central"/>
</dbReference>
<dbReference type="GO" id="GO:0016192">
    <property type="term" value="P:vesicle-mediated transport"/>
    <property type="evidence" value="ECO:0000316"/>
    <property type="project" value="SGD"/>
</dbReference>
<dbReference type="CDD" id="cd00155">
    <property type="entry name" value="RasGEF"/>
    <property type="match status" value="1"/>
</dbReference>
<dbReference type="CDD" id="cd06224">
    <property type="entry name" value="REM"/>
    <property type="match status" value="1"/>
</dbReference>
<dbReference type="FunFam" id="1.10.840.10:FF:000019">
    <property type="entry name" value="Guanine nucleotide exchange factor LTE1"/>
    <property type="match status" value="1"/>
</dbReference>
<dbReference type="FunFam" id="1.20.870.10:FF:000021">
    <property type="entry name" value="Low temperature essential protein"/>
    <property type="match status" value="1"/>
</dbReference>
<dbReference type="Gene3D" id="1.10.840.10">
    <property type="entry name" value="Ras guanine-nucleotide exchange factors catalytic domain"/>
    <property type="match status" value="1"/>
</dbReference>
<dbReference type="Gene3D" id="1.20.870.10">
    <property type="entry name" value="Son of sevenless (SoS) protein Chain: S domain 1"/>
    <property type="match status" value="1"/>
</dbReference>
<dbReference type="InterPro" id="IPR008937">
    <property type="entry name" value="Ras-like_GEF"/>
</dbReference>
<dbReference type="InterPro" id="IPR000651">
    <property type="entry name" value="Ras-like_Gua-exchang_fac_N"/>
</dbReference>
<dbReference type="InterPro" id="IPR019804">
    <property type="entry name" value="Ras_G-nucl-exch_fac_CS"/>
</dbReference>
<dbReference type="InterPro" id="IPR023578">
    <property type="entry name" value="Ras_GEF_dom_sf"/>
</dbReference>
<dbReference type="InterPro" id="IPR001895">
    <property type="entry name" value="RASGEF_cat_dom"/>
</dbReference>
<dbReference type="InterPro" id="IPR036964">
    <property type="entry name" value="RASGEF_cat_dom_sf"/>
</dbReference>
<dbReference type="PANTHER" id="PTHR23113">
    <property type="entry name" value="GUANINE NUCLEOTIDE EXCHANGE FACTOR"/>
    <property type="match status" value="1"/>
</dbReference>
<dbReference type="PANTHER" id="PTHR23113:SF363">
    <property type="entry name" value="PROTEIN SON OF SEVENLESS"/>
    <property type="match status" value="1"/>
</dbReference>
<dbReference type="Pfam" id="PF00617">
    <property type="entry name" value="RasGEF"/>
    <property type="match status" value="1"/>
</dbReference>
<dbReference type="Pfam" id="PF00618">
    <property type="entry name" value="RasGEF_N"/>
    <property type="match status" value="1"/>
</dbReference>
<dbReference type="SMART" id="SM00147">
    <property type="entry name" value="RasGEF"/>
    <property type="match status" value="1"/>
</dbReference>
<dbReference type="SMART" id="SM00229">
    <property type="entry name" value="RasGEFN"/>
    <property type="match status" value="1"/>
</dbReference>
<dbReference type="SUPFAM" id="SSF48366">
    <property type="entry name" value="Ras GEF"/>
    <property type="match status" value="1"/>
</dbReference>
<dbReference type="PROSITE" id="PS00720">
    <property type="entry name" value="RASGEF"/>
    <property type="match status" value="1"/>
</dbReference>
<dbReference type="PROSITE" id="PS50009">
    <property type="entry name" value="RASGEF_CAT"/>
    <property type="match status" value="1"/>
</dbReference>
<dbReference type="PROSITE" id="PS50212">
    <property type="entry name" value="RASGEF_NTER"/>
    <property type="match status" value="1"/>
</dbReference>
<reference key="1">
    <citation type="journal article" date="1994" name="Yeast">
        <title>LTE1 of Saccharomyces cerevisiae is a 1435 codon open reading frame that has sequence similarities to guanine nucleotide releasing factors.</title>
        <authorList>
            <person name="Keng T."/>
            <person name="Clark M.W."/>
            <person name="Storms R.K."/>
            <person name="Fortin N."/>
            <person name="Zhong W."/>
            <person name="Ouellette B.F.F."/>
            <person name="Barton A.B."/>
            <person name="Kaback D.B."/>
            <person name="Bussey H."/>
        </authorList>
    </citation>
    <scope>NUCLEOTIDE SEQUENCE [GENOMIC DNA]</scope>
    <source>
        <strain>ATCC 204511 / S288c / AB972</strain>
    </source>
</reference>
<reference key="2">
    <citation type="journal article" date="1995" name="Proc. Natl. Acad. Sci. U.S.A.">
        <title>The nucleotide sequence of chromosome I from Saccharomyces cerevisiae.</title>
        <authorList>
            <person name="Bussey H."/>
            <person name="Kaback D.B."/>
            <person name="Zhong W.-W."/>
            <person name="Vo D.H."/>
            <person name="Clark M.W."/>
            <person name="Fortin N."/>
            <person name="Hall J."/>
            <person name="Ouellette B.F.F."/>
            <person name="Keng T."/>
            <person name="Barton A.B."/>
            <person name="Su Y."/>
            <person name="Davies C.J."/>
            <person name="Storms R.K."/>
        </authorList>
    </citation>
    <scope>NUCLEOTIDE SEQUENCE [LARGE SCALE GENOMIC DNA]</scope>
    <source>
        <strain>ATCC 204508 / S288c</strain>
    </source>
</reference>
<reference key="3">
    <citation type="journal article" date="2014" name="G3 (Bethesda)">
        <title>The reference genome sequence of Saccharomyces cerevisiae: Then and now.</title>
        <authorList>
            <person name="Engel S.R."/>
            <person name="Dietrich F.S."/>
            <person name="Fisk D.G."/>
            <person name="Binkley G."/>
            <person name="Balakrishnan R."/>
            <person name="Costanzo M.C."/>
            <person name="Dwight S.S."/>
            <person name="Hitz B.C."/>
            <person name="Karra K."/>
            <person name="Nash R.S."/>
            <person name="Weng S."/>
            <person name="Wong E.D."/>
            <person name="Lloyd P."/>
            <person name="Skrzypek M.S."/>
            <person name="Miyasato S.R."/>
            <person name="Simison M."/>
            <person name="Cherry J.M."/>
        </authorList>
    </citation>
    <scope>GENOME REANNOTATION</scope>
    <source>
        <strain>ATCC 204508 / S288c</strain>
    </source>
</reference>
<reference key="4">
    <citation type="journal article" date="1994" name="Yeast">
        <title>Isolation of a CDC25 family gene, MSI2/LTE1, as a multicopy suppressor of ira1.</title>
        <authorList>
            <person name="Shirayama M."/>
            <person name="Matsui Y."/>
            <person name="Tanaka K."/>
            <person name="Toh-e A."/>
        </authorList>
    </citation>
    <scope>NUCLEOTIDE SEQUENCE [GENOMIC DNA]</scope>
    <scope>FUNCTION</scope>
</reference>
<reference key="5">
    <citation type="journal article" date="1987" name="Yeast">
        <title>Molecular cloning of chromosome I DNA from Saccharomyces cerevisiae: isolation of the MAK16 gene and analysis of an adjacent gene essential for growth at low temperatures.</title>
        <authorList>
            <person name="Wickner R.B."/>
            <person name="Koh T.J."/>
            <person name="Crowley J.C."/>
            <person name="O'Neil J."/>
            <person name="Kaback D.B."/>
        </authorList>
    </citation>
    <scope>NUCLEOTIDE SEQUENCE [GENOMIC DNA] OF 1127-1435</scope>
    <scope>FUNCTION</scope>
</reference>
<reference key="6">
    <citation type="journal article" date="1988" name="Proc. Natl. Acad. Sci. U.S.A.">
        <title>Host function of MAK16: G1 arrest by a mak16 mutant of Saccharomyces cerevisiae.</title>
        <authorList>
            <person name="Wickner R.B."/>
        </authorList>
    </citation>
    <scope>NUCLEOTIDE SEQUENCE [GENOMIC DNA] OF 1404-1435</scope>
</reference>
<reference key="7">
    <citation type="journal article" date="1994" name="Mol. Cell. Biol.">
        <title>The yeast TEM1 gene, which encodes a GTP-binding protein, is involved in termination of M phase.</title>
        <authorList>
            <person name="Shirayama M."/>
            <person name="Matsui Y."/>
            <person name="Toh-e A."/>
        </authorList>
    </citation>
    <scope>FUNCTION</scope>
</reference>
<reference key="8">
    <citation type="journal article" date="1999" name="Cell">
        <title>Exit from mitosis is triggered by Tem1-dependent release of the protein phosphatase Cdc14 from nucleolar RENT complex.</title>
        <authorList>
            <person name="Shou W."/>
            <person name="Seol J.H."/>
            <person name="Shevchenko A."/>
            <person name="Baskerville C."/>
            <person name="Moazed D."/>
            <person name="Chen Z.W.S."/>
            <person name="Jang J."/>
            <person name="Shevchenko A."/>
            <person name="Charbonneau H."/>
            <person name="Deshaies R.J."/>
        </authorList>
    </citation>
    <scope>FUNCTION</scope>
</reference>
<reference key="9">
    <citation type="journal article" date="2000" name="Cell">
        <title>A mechanism for coupling exit from mitosis to partitioning of the nucleus.</title>
        <authorList>
            <person name="Bardin A.J."/>
            <person name="Visintin R."/>
            <person name="Amon A."/>
        </authorList>
    </citation>
    <scope>FUNCTION</scope>
    <scope>SUBCELLULAR LOCATION</scope>
</reference>
<reference key="10">
    <citation type="journal article" date="2000" name="EMBO J.">
        <title>Nud1p links astral microtubule organization and the control of exit from mitosis.</title>
        <authorList>
            <person name="Gruneberg U."/>
            <person name="Campbell K."/>
            <person name="Simpson C."/>
            <person name="Grindlay J."/>
            <person name="Schiebel E."/>
        </authorList>
    </citation>
    <scope>FUNCTION</scope>
</reference>
<reference key="11">
    <citation type="journal article" date="2001" name="J. Cell Biol.">
        <title>The surveillance mechanism of the spindle position checkpoint in yeast.</title>
        <authorList>
            <person name="Adames N.R."/>
            <person name="Oberle J.R."/>
            <person name="Cooper J.A."/>
        </authorList>
    </citation>
    <scope>FUNCTION</scope>
</reference>
<reference key="12">
    <citation type="journal article" date="2001" name="J. Cell Sci.">
        <title>The Bub2-dependent mitotic pathway in yeast acts every cell cycle and regulates cytokinesis.</title>
        <authorList>
            <person name="Lee S.E."/>
            <person name="Jensen S."/>
            <person name="Frenz L.M."/>
            <person name="Johnson A.L."/>
            <person name="Fesquet D."/>
            <person name="Johnston L.H."/>
        </authorList>
    </citation>
    <scope>PHOSPHORYLATION</scope>
</reference>
<reference key="13">
    <citation type="journal article" date="2002" name="Curr. Biol.">
        <title>Control of Lte1 localization by cell polarity determinants and Cdc14.</title>
        <authorList>
            <person name="Seshan A."/>
            <person name="Bardin A.J."/>
            <person name="Amon A."/>
        </authorList>
    </citation>
    <scope>SUBCELLULAR LOCATION</scope>
    <scope>PHOSPHORYLATION</scope>
    <scope>INTERACTION WITH KEL1</scope>
</reference>
<reference key="14">
    <citation type="journal article" date="2002" name="EMBO J.">
        <title>A role for cell polarity proteins in mitotic exit.</title>
        <authorList>
            <person name="Hoefken T."/>
            <person name="Schiebel E."/>
        </authorList>
    </citation>
    <scope>FUNCTION</scope>
    <scope>SUBCELLULAR LOCATION</scope>
    <scope>PHOSPHORYLATION</scope>
    <scope>INTERACTION WITH CDC24; CDC42; KEL1; KEL2 AND TEM1</scope>
</reference>
<reference key="15">
    <citation type="journal article" date="2002" name="J. Cell Sci.">
        <title>Spatial regulation of the guanine nucleotide exchange factor Lte1 in Saccharomyces cerevisiae.</title>
        <authorList>
            <person name="Jensen S."/>
            <person name="Geymonat M."/>
            <person name="Johnson A.L."/>
            <person name="Segal M."/>
            <person name="Johnston L.H."/>
        </authorList>
    </citation>
    <scope>SUBCELLULAR LOCATION</scope>
    <scope>PHOSPHORYLATION BY CDC28</scope>
    <scope>DEPHOSPHORYLATION BY CDC14</scope>
</reference>
<reference key="16">
    <citation type="journal article" date="2003" name="Curr. Biol.">
        <title>Septins have a dual role in controlling mitotic exit in budding yeast.</title>
        <authorList>
            <person name="Castillon G.A."/>
            <person name="Adames N.R."/>
            <person name="Rosello C.H."/>
            <person name="Seidel H.S."/>
            <person name="Longtine M.S."/>
            <person name="Cooper J.A."/>
            <person name="Heil-Chapdelaine R.A."/>
        </authorList>
    </citation>
    <scope>FUNCTION</scope>
    <scope>SUBCELLULAR LOCATION</scope>
</reference>
<reference key="17">
    <citation type="journal article" date="2003" name="J. Cell Biol.">
        <title>Ras recruits mitotic exit regulator Lte1 to the bud cortex in budding yeast.</title>
        <authorList>
            <person name="Yoshida S."/>
            <person name="Ichihashi R."/>
            <person name="Toh-e A."/>
        </authorList>
    </citation>
    <scope>FUNCTION</scope>
    <scope>SUBCELLULAR LOCATION</scope>
    <scope>INTERACTION WITH RAS2</scope>
</reference>
<reference key="18">
    <citation type="journal article" date="2003" name="Nature">
        <title>Global analysis of protein localization in budding yeast.</title>
        <authorList>
            <person name="Huh W.-K."/>
            <person name="Falvo J.V."/>
            <person name="Gerke L.C."/>
            <person name="Carroll A.S."/>
            <person name="Howson R.W."/>
            <person name="Weissman J.S."/>
            <person name="O'Shea E.K."/>
        </authorList>
    </citation>
    <scope>SUBCELLULAR LOCATION [LARGE SCALE ANALYSIS]</scope>
</reference>
<reference key="19">
    <citation type="journal article" date="2003" name="Nature">
        <title>Global analysis of protein expression in yeast.</title>
        <authorList>
            <person name="Ghaemmaghami S."/>
            <person name="Huh W.-K."/>
            <person name="Bower K."/>
            <person name="Howson R.W."/>
            <person name="Belle A."/>
            <person name="Dephoure N."/>
            <person name="O'Shea E.K."/>
            <person name="Weissman J.S."/>
        </authorList>
    </citation>
    <scope>LEVEL OF PROTEIN EXPRESSION [LARGE SCALE ANALYSIS]</scope>
</reference>
<reference key="20">
    <citation type="journal article" date="2004" name="Cell Cycle">
        <title>Temporal coupling of spindle disassembly and cytokinesis is disrupted by deletion of LTE1 in budding yeast.</title>
        <authorList>
            <person name="Jensen S."/>
            <person name="Johnson A.L."/>
            <person name="Johnston L.H."/>
            <person name="Segal M."/>
        </authorList>
    </citation>
    <scope>FUNCTION</scope>
</reference>
<reference key="21">
    <citation type="journal article" date="2004" name="Mol. Biol. Cell">
        <title>The differential roles of budding yeast Tem1p, Cdc15p, and Bub2p protein dynamics in mitotic exit.</title>
        <authorList>
            <person name="Molk J.N."/>
            <person name="Schuyler S.C."/>
            <person name="Liu J.Y."/>
            <person name="Evans J.G."/>
            <person name="Salmon E.D."/>
            <person name="Pellman D."/>
            <person name="Bloom K."/>
        </authorList>
    </citation>
    <scope>FUNCTION</scope>
    <scope>SUBCELLULAR LOCATION</scope>
</reference>
<reference key="22">
    <citation type="journal article" date="2007" name="J. Biol. Chem.">
        <title>A role for Lte1p (a low temperature essential protein involved in mitosis) in proprotein processing in the yeast secretory pathway.</title>
        <authorList>
            <person name="Zhao X."/>
            <person name="Chang A.Y."/>
            <person name="Toh-e A."/>
            <person name="Arvan P."/>
        </authorList>
    </citation>
    <scope>FUNCTION</scope>
</reference>
<reference key="23">
    <citation type="journal article" date="2007" name="J. Proteome Res.">
        <title>Large-scale phosphorylation analysis of alpha-factor-arrested Saccharomyces cerevisiae.</title>
        <authorList>
            <person name="Li X."/>
            <person name="Gerber S.A."/>
            <person name="Rudner A.D."/>
            <person name="Beausoleil S.A."/>
            <person name="Haas W."/>
            <person name="Villen J."/>
            <person name="Elias J.E."/>
            <person name="Gygi S.P."/>
        </authorList>
    </citation>
    <scope>IDENTIFICATION BY MASS SPECTROMETRY [LARGE SCALE ANALYSIS]</scope>
    <source>
        <strain>ADR376</strain>
    </source>
</reference>
<reference key="24">
    <citation type="journal article" date="2008" name="Mol. Cell. Proteomics">
        <title>A multidimensional chromatography technology for in-depth phosphoproteome analysis.</title>
        <authorList>
            <person name="Albuquerque C.P."/>
            <person name="Smolka M.B."/>
            <person name="Payne S.H."/>
            <person name="Bafna V."/>
            <person name="Eng J."/>
            <person name="Zhou H."/>
        </authorList>
    </citation>
    <scope>PHOSPHORYLATION [LARGE SCALE ANALYSIS] AT SER-271 AND SER-1028</scope>
    <scope>IDENTIFICATION BY MASS SPECTROMETRY [LARGE SCALE ANALYSIS]</scope>
</reference>
<reference key="25">
    <citation type="journal article" date="2009" name="Science">
        <title>Global analysis of Cdk1 substrate phosphorylation sites provides insights into evolution.</title>
        <authorList>
            <person name="Holt L.J."/>
            <person name="Tuch B.B."/>
            <person name="Villen J."/>
            <person name="Johnson A.D."/>
            <person name="Gygi S.P."/>
            <person name="Morgan D.O."/>
        </authorList>
    </citation>
    <scope>PHOSPHORYLATION [LARGE SCALE ANALYSIS] AT SER-559; SER-689; THR-691; SER-808; SER-810; SER-1028 AND SER-1109</scope>
    <scope>IDENTIFICATION BY MASS SPECTROMETRY [LARGE SCALE ANALYSIS]</scope>
</reference>
<accession>P07866</accession>
<accession>D6VPJ4</accession>
<name>LTE1_YEAST</name>